<keyword id="KW-0326">Glycosidase</keyword>
<keyword id="KW-0378">Hydrolase</keyword>
<reference key="1">
    <citation type="journal article" date="2008" name="Genome Res.">
        <title>Comparative genome analysis of Salmonella enteritidis PT4 and Salmonella gallinarum 287/91 provides insights into evolutionary and host adaptation pathways.</title>
        <authorList>
            <person name="Thomson N.R."/>
            <person name="Clayton D.J."/>
            <person name="Windhorst D."/>
            <person name="Vernikos G."/>
            <person name="Davidson S."/>
            <person name="Churcher C."/>
            <person name="Quail M.A."/>
            <person name="Stevens M."/>
            <person name="Jones M.A."/>
            <person name="Watson M."/>
            <person name="Barron A."/>
            <person name="Layton A."/>
            <person name="Pickard D."/>
            <person name="Kingsley R.A."/>
            <person name="Bignell A."/>
            <person name="Clark L."/>
            <person name="Harris B."/>
            <person name="Ormond D."/>
            <person name="Abdellah Z."/>
            <person name="Brooks K."/>
            <person name="Cherevach I."/>
            <person name="Chillingworth T."/>
            <person name="Woodward J."/>
            <person name="Norberczak H."/>
            <person name="Lord A."/>
            <person name="Arrowsmith C."/>
            <person name="Jagels K."/>
            <person name="Moule S."/>
            <person name="Mungall K."/>
            <person name="Saunders M."/>
            <person name="Whitehead S."/>
            <person name="Chabalgoity J.A."/>
            <person name="Maskell D."/>
            <person name="Humphreys T."/>
            <person name="Roberts M."/>
            <person name="Barrow P.A."/>
            <person name="Dougan G."/>
            <person name="Parkhill J."/>
        </authorList>
    </citation>
    <scope>NUCLEOTIDE SEQUENCE [LARGE SCALE GENOMIC DNA]</scope>
    <source>
        <strain>287/91 / NCTC 13346</strain>
    </source>
</reference>
<accession>B5RG86</accession>
<comment type="function">
    <text evidence="1">Hydrolyzes both purine and pyrimidine ribonucleosides with a broad-substrate specificity.</text>
</comment>
<comment type="similarity">
    <text evidence="1">Belongs to the IUNH family. RihC subfamily.</text>
</comment>
<organism>
    <name type="scientific">Salmonella gallinarum (strain 287/91 / NCTC 13346)</name>
    <dbReference type="NCBI Taxonomy" id="550538"/>
    <lineage>
        <taxon>Bacteria</taxon>
        <taxon>Pseudomonadati</taxon>
        <taxon>Pseudomonadota</taxon>
        <taxon>Gammaproteobacteria</taxon>
        <taxon>Enterobacterales</taxon>
        <taxon>Enterobacteriaceae</taxon>
        <taxon>Salmonella</taxon>
    </lineage>
</organism>
<dbReference type="EC" id="3.2.-.-" evidence="1"/>
<dbReference type="EMBL" id="AM933173">
    <property type="protein sequence ID" value="CAR35962.1"/>
    <property type="molecule type" value="Genomic_DNA"/>
</dbReference>
<dbReference type="RefSeq" id="WP_000127276.1">
    <property type="nucleotide sequence ID" value="NC_011274.1"/>
</dbReference>
<dbReference type="SMR" id="B5RG86"/>
<dbReference type="KEGG" id="seg:SG0054"/>
<dbReference type="HOGENOM" id="CLU_036838_2_2_6"/>
<dbReference type="Proteomes" id="UP000008321">
    <property type="component" value="Chromosome"/>
</dbReference>
<dbReference type="GO" id="GO:0005829">
    <property type="term" value="C:cytosol"/>
    <property type="evidence" value="ECO:0007669"/>
    <property type="project" value="TreeGrafter"/>
</dbReference>
<dbReference type="GO" id="GO:0008477">
    <property type="term" value="F:purine nucleosidase activity"/>
    <property type="evidence" value="ECO:0007669"/>
    <property type="project" value="TreeGrafter"/>
</dbReference>
<dbReference type="GO" id="GO:0006144">
    <property type="term" value="P:purine nucleobase metabolic process"/>
    <property type="evidence" value="ECO:0007669"/>
    <property type="project" value="UniProtKB-UniRule"/>
</dbReference>
<dbReference type="GO" id="GO:0006152">
    <property type="term" value="P:purine nucleoside catabolic process"/>
    <property type="evidence" value="ECO:0007669"/>
    <property type="project" value="TreeGrafter"/>
</dbReference>
<dbReference type="GO" id="GO:0006206">
    <property type="term" value="P:pyrimidine nucleobase metabolic process"/>
    <property type="evidence" value="ECO:0007669"/>
    <property type="project" value="UniProtKB-UniRule"/>
</dbReference>
<dbReference type="CDD" id="cd02651">
    <property type="entry name" value="nuc_hydro_IU_UC_XIUA"/>
    <property type="match status" value="1"/>
</dbReference>
<dbReference type="FunFam" id="3.90.245.10:FF:000002">
    <property type="entry name" value="Non-specific ribonucleoside hydrolase RihC"/>
    <property type="match status" value="1"/>
</dbReference>
<dbReference type="Gene3D" id="3.90.245.10">
    <property type="entry name" value="Ribonucleoside hydrolase-like"/>
    <property type="match status" value="1"/>
</dbReference>
<dbReference type="HAMAP" id="MF_01432">
    <property type="entry name" value="Nucleosid_hydro_RihC"/>
    <property type="match status" value="1"/>
</dbReference>
<dbReference type="InterPro" id="IPR001910">
    <property type="entry name" value="Inosine/uridine_hydrolase_dom"/>
</dbReference>
<dbReference type="InterPro" id="IPR023186">
    <property type="entry name" value="IUNH"/>
</dbReference>
<dbReference type="InterPro" id="IPR022976">
    <property type="entry name" value="Nucleosid_hydro_RihC_nonspecif"/>
</dbReference>
<dbReference type="InterPro" id="IPR036452">
    <property type="entry name" value="Ribo_hydro-like"/>
</dbReference>
<dbReference type="NCBIfam" id="NF008036">
    <property type="entry name" value="PRK10768.1"/>
    <property type="match status" value="1"/>
</dbReference>
<dbReference type="PANTHER" id="PTHR12304">
    <property type="entry name" value="INOSINE-URIDINE PREFERRING NUCLEOSIDE HYDROLASE"/>
    <property type="match status" value="1"/>
</dbReference>
<dbReference type="PANTHER" id="PTHR12304:SF15">
    <property type="entry name" value="NON-SPECIFIC RIBONUCLEOSIDE HYDROLASE RIHC"/>
    <property type="match status" value="1"/>
</dbReference>
<dbReference type="Pfam" id="PF01156">
    <property type="entry name" value="IU_nuc_hydro"/>
    <property type="match status" value="1"/>
</dbReference>
<dbReference type="SUPFAM" id="SSF53590">
    <property type="entry name" value="Nucleoside hydrolase"/>
    <property type="match status" value="1"/>
</dbReference>
<protein>
    <recommendedName>
        <fullName evidence="1">Non-specific ribonucleoside hydrolase RihC</fullName>
        <ecNumber evidence="1">3.2.-.-</ecNumber>
    </recommendedName>
    <alternativeName>
        <fullName evidence="1">Purine/pyrimidine ribonucleoside hydrolase</fullName>
    </alternativeName>
</protein>
<proteinExistence type="inferred from homology"/>
<evidence type="ECO:0000255" key="1">
    <source>
        <dbReference type="HAMAP-Rule" id="MF_01432"/>
    </source>
</evidence>
<gene>
    <name evidence="1" type="primary">rihC</name>
    <name type="ordered locus">SG0054</name>
</gene>
<sequence>MTASLHIILDTDPGIDDAAAIAAALFAPQLDLQLITTVAGNVSVEKTTRNALQLLHFWDADVPLAQGAATPLLRPLRDAAYVHGESGMEGYDFVDHQRQPLAKPAFIAIRDVLMNAPEPMTLVAIGPLTNIALLLMHYPECACNIRRLVLMGGSAGRGNFTPNAEFNIAVDPEAAALVFRSGLEIVMCGLDVTNQAMLSPDFLNKLPALNRTGKMLHSLFNHYRSGSMRTGVRMHDLCAIAWLVRPELFTLQSCFVAVETQGEYTAGTTVVDIEGRLGQPANAQVALALDVDGFRQWVAEVFAYAP</sequence>
<name>RIHC_SALG2</name>
<feature type="chain" id="PRO_1000145821" description="Non-specific ribonucleoside hydrolase RihC">
    <location>
        <begin position="1"/>
        <end position="306"/>
    </location>
</feature>
<feature type="active site" evidence="1">
    <location>
        <position position="235"/>
    </location>
</feature>